<name>PROA_SALTO</name>
<dbReference type="EC" id="1.2.1.41" evidence="1"/>
<dbReference type="EMBL" id="CP000667">
    <property type="protein sequence ID" value="ABP52870.1"/>
    <property type="molecule type" value="Genomic_DNA"/>
</dbReference>
<dbReference type="RefSeq" id="WP_011904304.1">
    <property type="nucleotide sequence ID" value="NC_009380.1"/>
</dbReference>
<dbReference type="SMR" id="A4X1X0"/>
<dbReference type="STRING" id="369723.Strop_0385"/>
<dbReference type="KEGG" id="stp:Strop_0385"/>
<dbReference type="PATRIC" id="fig|369723.5.peg.399"/>
<dbReference type="eggNOG" id="COG0014">
    <property type="taxonomic scope" value="Bacteria"/>
</dbReference>
<dbReference type="HOGENOM" id="CLU_030231_0_0_11"/>
<dbReference type="UniPathway" id="UPA00098">
    <property type="reaction ID" value="UER00360"/>
</dbReference>
<dbReference type="Proteomes" id="UP000000235">
    <property type="component" value="Chromosome"/>
</dbReference>
<dbReference type="GO" id="GO:0005737">
    <property type="term" value="C:cytoplasm"/>
    <property type="evidence" value="ECO:0007669"/>
    <property type="project" value="UniProtKB-SubCell"/>
</dbReference>
<dbReference type="GO" id="GO:0004350">
    <property type="term" value="F:glutamate-5-semialdehyde dehydrogenase activity"/>
    <property type="evidence" value="ECO:0007669"/>
    <property type="project" value="UniProtKB-UniRule"/>
</dbReference>
<dbReference type="GO" id="GO:0050661">
    <property type="term" value="F:NADP binding"/>
    <property type="evidence" value="ECO:0007669"/>
    <property type="project" value="InterPro"/>
</dbReference>
<dbReference type="GO" id="GO:0055129">
    <property type="term" value="P:L-proline biosynthetic process"/>
    <property type="evidence" value="ECO:0007669"/>
    <property type="project" value="UniProtKB-UniRule"/>
</dbReference>
<dbReference type="CDD" id="cd07079">
    <property type="entry name" value="ALDH_F18-19_ProA-GPR"/>
    <property type="match status" value="1"/>
</dbReference>
<dbReference type="FunFam" id="3.40.309.10:FF:000006">
    <property type="entry name" value="Gamma-glutamyl phosphate reductase"/>
    <property type="match status" value="1"/>
</dbReference>
<dbReference type="Gene3D" id="3.40.605.10">
    <property type="entry name" value="Aldehyde Dehydrogenase, Chain A, domain 1"/>
    <property type="match status" value="1"/>
</dbReference>
<dbReference type="Gene3D" id="3.40.309.10">
    <property type="entry name" value="Aldehyde Dehydrogenase, Chain A, domain 2"/>
    <property type="match status" value="1"/>
</dbReference>
<dbReference type="HAMAP" id="MF_00412">
    <property type="entry name" value="ProA"/>
    <property type="match status" value="1"/>
</dbReference>
<dbReference type="InterPro" id="IPR016161">
    <property type="entry name" value="Ald_DH/histidinol_DH"/>
</dbReference>
<dbReference type="InterPro" id="IPR016163">
    <property type="entry name" value="Ald_DH_C"/>
</dbReference>
<dbReference type="InterPro" id="IPR016162">
    <property type="entry name" value="Ald_DH_N"/>
</dbReference>
<dbReference type="InterPro" id="IPR015590">
    <property type="entry name" value="Aldehyde_DH_dom"/>
</dbReference>
<dbReference type="InterPro" id="IPR020593">
    <property type="entry name" value="G-glutamylP_reductase_CS"/>
</dbReference>
<dbReference type="InterPro" id="IPR012134">
    <property type="entry name" value="Glu-5-SA_DH"/>
</dbReference>
<dbReference type="InterPro" id="IPR000965">
    <property type="entry name" value="GPR_dom"/>
</dbReference>
<dbReference type="NCBIfam" id="NF001221">
    <property type="entry name" value="PRK00197.1"/>
    <property type="match status" value="1"/>
</dbReference>
<dbReference type="NCBIfam" id="TIGR00407">
    <property type="entry name" value="proA"/>
    <property type="match status" value="1"/>
</dbReference>
<dbReference type="PANTHER" id="PTHR11063:SF8">
    <property type="entry name" value="DELTA-1-PYRROLINE-5-CARBOXYLATE SYNTHASE"/>
    <property type="match status" value="1"/>
</dbReference>
<dbReference type="PANTHER" id="PTHR11063">
    <property type="entry name" value="GLUTAMATE SEMIALDEHYDE DEHYDROGENASE"/>
    <property type="match status" value="1"/>
</dbReference>
<dbReference type="Pfam" id="PF00171">
    <property type="entry name" value="Aldedh"/>
    <property type="match status" value="1"/>
</dbReference>
<dbReference type="PIRSF" id="PIRSF000151">
    <property type="entry name" value="GPR"/>
    <property type="match status" value="1"/>
</dbReference>
<dbReference type="SUPFAM" id="SSF53720">
    <property type="entry name" value="ALDH-like"/>
    <property type="match status" value="1"/>
</dbReference>
<dbReference type="PROSITE" id="PS01223">
    <property type="entry name" value="PROA"/>
    <property type="match status" value="1"/>
</dbReference>
<gene>
    <name evidence="1" type="primary">proA</name>
    <name type="ordered locus">Strop_0385</name>
</gene>
<reference key="1">
    <citation type="journal article" date="2007" name="Proc. Natl. Acad. Sci. U.S.A.">
        <title>Genome sequencing reveals complex secondary metabolome in the marine actinomycete Salinispora tropica.</title>
        <authorList>
            <person name="Udwary D.W."/>
            <person name="Zeigler L."/>
            <person name="Asolkar R.N."/>
            <person name="Singan V."/>
            <person name="Lapidus A."/>
            <person name="Fenical W."/>
            <person name="Jensen P.R."/>
            <person name="Moore B.S."/>
        </authorList>
    </citation>
    <scope>NUCLEOTIDE SEQUENCE [LARGE SCALE GENOMIC DNA]</scope>
    <source>
        <strain>ATCC BAA-916 / DSM 44818 / JCM 13857 / NBRC 105044 / CNB-440</strain>
    </source>
</reference>
<organism>
    <name type="scientific">Salinispora tropica (strain ATCC BAA-916 / DSM 44818 / JCM 13857 / NBRC 105044 / CNB-440)</name>
    <dbReference type="NCBI Taxonomy" id="369723"/>
    <lineage>
        <taxon>Bacteria</taxon>
        <taxon>Bacillati</taxon>
        <taxon>Actinomycetota</taxon>
        <taxon>Actinomycetes</taxon>
        <taxon>Micromonosporales</taxon>
        <taxon>Micromonosporaceae</taxon>
        <taxon>Salinispora</taxon>
    </lineage>
</organism>
<feature type="chain" id="PRO_0000340913" description="Gamma-glutamyl phosphate reductase">
    <location>
        <begin position="1"/>
        <end position="413"/>
    </location>
</feature>
<accession>A4X1X0</accession>
<protein>
    <recommendedName>
        <fullName evidence="1">Gamma-glutamyl phosphate reductase</fullName>
        <shortName evidence="1">GPR</shortName>
        <ecNumber evidence="1">1.2.1.41</ecNumber>
    </recommendedName>
    <alternativeName>
        <fullName evidence="1">Glutamate-5-semialdehyde dehydrogenase</fullName>
    </alternativeName>
    <alternativeName>
        <fullName evidence="1">Glutamyl-gamma-semialdehyde dehydrogenase</fullName>
        <shortName evidence="1">GSA dehydrogenase</shortName>
    </alternativeName>
</protein>
<keyword id="KW-0028">Amino-acid biosynthesis</keyword>
<keyword id="KW-0963">Cytoplasm</keyword>
<keyword id="KW-0521">NADP</keyword>
<keyword id="KW-0560">Oxidoreductase</keyword>
<keyword id="KW-0641">Proline biosynthesis</keyword>
<keyword id="KW-1185">Reference proteome</keyword>
<sequence length="413" mass="42349">MSVVEQAQRARTAAAALAVATRADKDAALHAMADALVARTSEILAANGADLAAGRDEGLSTAILDRLALDAGRVADIADALRQMAALPDPTGEVVRGSTLPNGLQLRQIRVPFGVVGIIYEARPNVTVDAAGICLKSGNAVLLRGSSSAARSNVALVSVLRDAVAGTGLPADSVQLLDATTRDSVKELMRARGLVDVLIPRGGAALIRTVVEEATVPVIETGVGNCHVYVDAAADVSKAVAIALNAKTQRLSTCNTAESLLVHTAVADAVLPPALAAFAAAGVTVHGCPQVARHSTAVLPATDEDYATEYLSADISVAVVESLDAAVAHIQRYGTGHTEAIVTDSQSAAREFVARVDAAAVMVNASTRFTDGGEFGFGAEIGISTQKLHARGPMGLPELTSTKYVVTGDGQLR</sequence>
<comment type="function">
    <text evidence="1">Catalyzes the NADPH-dependent reduction of L-glutamate 5-phosphate into L-glutamate 5-semialdehyde and phosphate. The product spontaneously undergoes cyclization to form 1-pyrroline-5-carboxylate.</text>
</comment>
<comment type="catalytic activity">
    <reaction evidence="1">
        <text>L-glutamate 5-semialdehyde + phosphate + NADP(+) = L-glutamyl 5-phosphate + NADPH + H(+)</text>
        <dbReference type="Rhea" id="RHEA:19541"/>
        <dbReference type="ChEBI" id="CHEBI:15378"/>
        <dbReference type="ChEBI" id="CHEBI:43474"/>
        <dbReference type="ChEBI" id="CHEBI:57783"/>
        <dbReference type="ChEBI" id="CHEBI:58066"/>
        <dbReference type="ChEBI" id="CHEBI:58274"/>
        <dbReference type="ChEBI" id="CHEBI:58349"/>
        <dbReference type="EC" id="1.2.1.41"/>
    </reaction>
</comment>
<comment type="pathway">
    <text evidence="1">Amino-acid biosynthesis; L-proline biosynthesis; L-glutamate 5-semialdehyde from L-glutamate: step 2/2.</text>
</comment>
<comment type="subcellular location">
    <subcellularLocation>
        <location evidence="1">Cytoplasm</location>
    </subcellularLocation>
</comment>
<comment type="similarity">
    <text evidence="1">Belongs to the gamma-glutamyl phosphate reductase family.</text>
</comment>
<evidence type="ECO:0000255" key="1">
    <source>
        <dbReference type="HAMAP-Rule" id="MF_00412"/>
    </source>
</evidence>
<proteinExistence type="inferred from homology"/>